<keyword id="KW-0496">Mitochondrion</keyword>
<accession>P15614</accession>
<comment type="subcellular location">
    <subcellularLocation>
        <location evidence="1">Mitochondrion</location>
    </subcellularLocation>
</comment>
<protein>
    <recommendedName>
        <fullName>Uncharacterized mitochondrial protein ORF13</fullName>
    </recommendedName>
</protein>
<geneLocation type="mitochondrion"/>
<name>YM13_PARTE</name>
<dbReference type="EMBL" id="X15917">
    <property type="protein sequence ID" value="CAA34057.1"/>
    <property type="molecule type" value="Genomic_DNA"/>
</dbReference>
<dbReference type="PIR" id="S07748">
    <property type="entry name" value="S07748"/>
</dbReference>
<dbReference type="SMR" id="P15614"/>
<dbReference type="GO" id="GO:0005739">
    <property type="term" value="C:mitochondrion"/>
    <property type="evidence" value="ECO:0007669"/>
    <property type="project" value="UniProtKB-SubCell"/>
</dbReference>
<proteinExistence type="predicted"/>
<feature type="chain" id="PRO_0000196874" description="Uncharacterized mitochondrial protein ORF13">
    <location>
        <begin position="1"/>
        <end position="169"/>
    </location>
</feature>
<reference key="1">
    <citation type="journal article" date="1990" name="Nucleic Acids Res.">
        <title>Nucleotide sequence of the mitochondrial genome of Paramecium.</title>
        <authorList>
            <person name="Pritchard A.E."/>
            <person name="Seilhamer J.J."/>
            <person name="Mahalingam R."/>
            <person name="Sable C.L."/>
            <person name="Venuti S.E."/>
            <person name="Cummings D.J."/>
        </authorList>
    </citation>
    <scope>NUCLEOTIDE SEQUENCE [GENOMIC DNA]</scope>
    <source>
        <strain>Stock 51</strain>
    </source>
</reference>
<sequence length="169" mass="20303">MCKPRGPKLKTYRPRRVLDWTVKLLCRQAADEKDFKKTSTYSKLDVEAMHSSFFFNNAPIEEAEASSQPEAPFLLPLKKISIFFAKKNYLYNKGKFSRNKQTYRTGVYLCIWLTVLTVVGLYFYFYLMSMKFTYNYLLFLFFLGLFFYKFFIKKNNKKFEVHTDLFENF</sequence>
<evidence type="ECO:0000305" key="1"/>
<organism>
    <name type="scientific">Paramecium tetraurelia</name>
    <dbReference type="NCBI Taxonomy" id="5888"/>
    <lineage>
        <taxon>Eukaryota</taxon>
        <taxon>Sar</taxon>
        <taxon>Alveolata</taxon>
        <taxon>Ciliophora</taxon>
        <taxon>Intramacronucleata</taxon>
        <taxon>Oligohymenophorea</taxon>
        <taxon>Peniculida</taxon>
        <taxon>Parameciidae</taxon>
        <taxon>Paramecium</taxon>
    </lineage>
</organism>